<organism>
    <name type="scientific">Solanum lycopersicum</name>
    <name type="common">Tomato</name>
    <name type="synonym">Lycopersicon esculentum</name>
    <dbReference type="NCBI Taxonomy" id="4081"/>
    <lineage>
        <taxon>Eukaryota</taxon>
        <taxon>Viridiplantae</taxon>
        <taxon>Streptophyta</taxon>
        <taxon>Embryophyta</taxon>
        <taxon>Tracheophyta</taxon>
        <taxon>Spermatophyta</taxon>
        <taxon>Magnoliopsida</taxon>
        <taxon>eudicotyledons</taxon>
        <taxon>Gunneridae</taxon>
        <taxon>Pentapetalae</taxon>
        <taxon>asterids</taxon>
        <taxon>lamiids</taxon>
        <taxon>Solanales</taxon>
        <taxon>Solanaceae</taxon>
        <taxon>Solanoideae</taxon>
        <taxon>Solaneae</taxon>
        <taxon>Solanum</taxon>
        <taxon>Solanum subgen. Lycopersicon</taxon>
    </lineage>
</organism>
<feature type="transit peptide" description="Chloroplast" evidence="2">
    <location>
        <begin position="1"/>
        <end position="32"/>
    </location>
</feature>
<feature type="chain" id="PRO_0000003712" description="Chlorophyll a-b binding protein 8, chloroplastic">
    <location>
        <begin position="33"/>
        <end position="273"/>
    </location>
</feature>
<feature type="transmembrane region" description="Helical" evidence="2">
    <location>
        <begin position="106"/>
        <end position="126"/>
    </location>
</feature>
<feature type="transmembrane region" description="Helical" evidence="2">
    <location>
        <begin position="231"/>
        <end position="251"/>
    </location>
</feature>
<feature type="binding site" description="axial binding residue" evidence="1">
    <location>
        <position position="56"/>
    </location>
    <ligand>
        <name>chlorophyll b</name>
        <dbReference type="ChEBI" id="CHEBI:61721"/>
        <label>1</label>
    </ligand>
    <ligandPart>
        <name>Mg</name>
        <dbReference type="ChEBI" id="CHEBI:25107"/>
    </ligandPart>
</feature>
<feature type="binding site" evidence="1">
    <location>
        <position position="76"/>
    </location>
    <ligand>
        <name>chlorophyll a</name>
        <dbReference type="ChEBI" id="CHEBI:58416"/>
        <label>1</label>
    </ligand>
</feature>
<feature type="binding site" evidence="1">
    <location>
        <position position="82"/>
    </location>
    <ligand>
        <name>chlorophyll a</name>
        <dbReference type="ChEBI" id="CHEBI:58416"/>
        <label>1</label>
    </ligand>
</feature>
<feature type="binding site" description="axial binding residue" evidence="1">
    <location>
        <position position="100"/>
    </location>
    <ligand>
        <name>chlorophyll a</name>
        <dbReference type="ChEBI" id="CHEBI:58416"/>
        <label>1</label>
    </ligand>
    <ligandPart>
        <name>Mg</name>
        <dbReference type="ChEBI" id="CHEBI:25107"/>
    </ligandPart>
</feature>
<feature type="binding site" evidence="1">
    <location>
        <position position="105"/>
    </location>
    <ligand>
        <name>chlorophyll b</name>
        <dbReference type="ChEBI" id="CHEBI:61721"/>
        <label>2</label>
    </ligand>
</feature>
<feature type="binding site" description="axial binding residue" evidence="1">
    <location>
        <position position="140"/>
    </location>
    <ligand>
        <name>chlorophyll b</name>
        <dbReference type="ChEBI" id="CHEBI:61721"/>
        <label>2</label>
    </ligand>
    <ligandPart>
        <name>Mg</name>
        <dbReference type="ChEBI" id="CHEBI:25107"/>
    </ligandPart>
</feature>
<feature type="binding site" description="axial binding residue" evidence="1">
    <location>
        <position position="167"/>
    </location>
    <ligand>
        <name>chlorophyll b</name>
        <dbReference type="ChEBI" id="CHEBI:61721"/>
        <label>3</label>
    </ligand>
    <ligandPart>
        <name>Mg</name>
        <dbReference type="ChEBI" id="CHEBI:25107"/>
    </ligandPart>
</feature>
<feature type="binding site" evidence="1">
    <location>
        <position position="170"/>
    </location>
    <ligand>
        <name>chlorophyll b</name>
        <dbReference type="ChEBI" id="CHEBI:61721"/>
        <label>4</label>
    </ligand>
</feature>
<feature type="binding site" evidence="1">
    <location>
        <position position="224"/>
    </location>
    <ligand>
        <name>chlorophyll a</name>
        <dbReference type="ChEBI" id="CHEBI:58416"/>
        <label>5</label>
    </ligand>
</feature>
<feature type="binding site" description="axial binding residue" evidence="1">
    <location>
        <position position="225"/>
    </location>
    <ligand>
        <name>chlorophyll a</name>
        <dbReference type="ChEBI" id="CHEBI:58416"/>
        <label>3</label>
    </ligand>
    <ligandPart>
        <name>Mg</name>
        <dbReference type="ChEBI" id="CHEBI:25107"/>
    </ligandPart>
</feature>
<feature type="binding site" description="axial binding residue" evidence="1">
    <location>
        <position position="228"/>
    </location>
    <ligand>
        <name>chlorophyll a</name>
        <dbReference type="ChEBI" id="CHEBI:58416"/>
        <label>4</label>
    </ligand>
    <ligandPart>
        <name>Mg</name>
        <dbReference type="ChEBI" id="CHEBI:25107"/>
    </ligandPart>
</feature>
<feature type="binding site" evidence="1">
    <location>
        <position position="230"/>
    </location>
    <ligand>
        <name>chlorophyll a</name>
        <dbReference type="ChEBI" id="CHEBI:58416"/>
        <label>1</label>
    </ligand>
</feature>
<feature type="binding site" description="axial binding residue" evidence="1">
    <location>
        <position position="242"/>
    </location>
    <ligand>
        <name>chlorophyll a</name>
        <dbReference type="ChEBI" id="CHEBI:58416"/>
        <label>5</label>
    </ligand>
    <ligandPart>
        <name>Mg</name>
        <dbReference type="ChEBI" id="CHEBI:25107"/>
    </ligandPart>
</feature>
<feature type="binding site" description="axial binding residue" evidence="1">
    <location>
        <position position="257"/>
    </location>
    <ligand>
        <name>chlorophyll a</name>
        <dbReference type="ChEBI" id="CHEBI:58416"/>
        <label>6</label>
    </ligand>
    <ligandPart>
        <name>Mg</name>
        <dbReference type="ChEBI" id="CHEBI:25107"/>
    </ligandPart>
</feature>
<feature type="modified residue" description="N2-acetylarginine" evidence="1">
    <location>
        <position position="33"/>
    </location>
</feature>
<evidence type="ECO:0000250" key="1"/>
<evidence type="ECO:0000255" key="2"/>
<evidence type="ECO:0000305" key="3"/>
<protein>
    <recommendedName>
        <fullName>Chlorophyll a-b binding protein 8, chloroplastic</fullName>
    </recommendedName>
    <alternativeName>
        <fullName>LHCI type III CAB-8</fullName>
    </alternativeName>
</protein>
<proteinExistence type="inferred from homology"/>
<comment type="function">
    <text>The light-harvesting complex (LHC) functions as a light receptor, it captures and delivers excitation energy to photosystems with which it is closely associated.</text>
</comment>
<comment type="cofactor">
    <text evidence="1">Binds at least 14 chlorophylls (8 Chl-a and 6 Chl-b) and carotenoids such as lutein and neoxanthin.</text>
</comment>
<comment type="subunit">
    <text>The LHC complex consists of chlorophyll a-b binding proteins.</text>
</comment>
<comment type="subcellular location">
    <subcellularLocation>
        <location>Plastid</location>
        <location>Chloroplast thylakoid membrane</location>
        <topology>Multi-pass membrane protein</topology>
    </subcellularLocation>
</comment>
<comment type="domain">
    <text>The N-terminus of the protein extends into the stroma where it is involved with adhesion of granal membranes and post-translational modifications; both are believed to mediate the distribution of excitation energy between photosystems I and II.</text>
</comment>
<comment type="PTM">
    <text evidence="1">Photoregulated by reversible phosphorylation of its threonine residues.</text>
</comment>
<comment type="similarity">
    <text evidence="3">Belongs to the light-harvesting chlorophyll a/b-binding (LHC) protein family.</text>
</comment>
<keyword id="KW-0007">Acetylation</keyword>
<keyword id="KW-0148">Chlorophyll</keyword>
<keyword id="KW-0150">Chloroplast</keyword>
<keyword id="KW-0157">Chromophore</keyword>
<keyword id="KW-0460">Magnesium</keyword>
<keyword id="KW-0472">Membrane</keyword>
<keyword id="KW-0479">Metal-binding</keyword>
<keyword id="KW-0597">Phosphoprotein</keyword>
<keyword id="KW-0602">Photosynthesis</keyword>
<keyword id="KW-0603">Photosystem I</keyword>
<keyword id="KW-0604">Photosystem II</keyword>
<keyword id="KW-0934">Plastid</keyword>
<keyword id="KW-1185">Reference proteome</keyword>
<keyword id="KW-0793">Thylakoid</keyword>
<keyword id="KW-0809">Transit peptide</keyword>
<keyword id="KW-0812">Transmembrane</keyword>
<keyword id="KW-1133">Transmembrane helix</keyword>
<sequence>MATQALISSSSISTSAEAARQIIGSRISQSVTRKASFVVRAASTPPVKQGANRQLWFASKQSLSYLDGRLPGDFGFDPLGLSDPEGTGGFIEPKWLAYGEVINGRFAMLGAAGAIAPEILGKAGLIPQETALAWFQTGVIPPAGTYNYWADNYTLFVLEMALMGFAEHRRFQDWAKPGSMGKQYFLGLEKGLGGSGDPAYPGGPLFNPLGFGKDEKSMKELKLKEIKNGRLAMLAILGYFIQALVTGVGPYQNLLDHLADPVNNNVLTSLKFH</sequence>
<dbReference type="EMBL" id="X15258">
    <property type="protein sequence ID" value="CAA33330.1"/>
    <property type="molecule type" value="Genomic_DNA"/>
</dbReference>
<dbReference type="PIR" id="S04125">
    <property type="entry name" value="S04125"/>
</dbReference>
<dbReference type="SMR" id="P27522"/>
<dbReference type="FunCoup" id="P27522">
    <property type="interactions" value="1030"/>
</dbReference>
<dbReference type="STRING" id="4081.P27522"/>
<dbReference type="PaxDb" id="4081-Solyc10g007690.2.1"/>
<dbReference type="eggNOG" id="ENOG502QT09">
    <property type="taxonomic scope" value="Eukaryota"/>
</dbReference>
<dbReference type="InParanoid" id="P27522"/>
<dbReference type="Proteomes" id="UP000004994">
    <property type="component" value="Unplaced"/>
</dbReference>
<dbReference type="ExpressionAtlas" id="P27522">
    <property type="expression patterns" value="baseline and differential"/>
</dbReference>
<dbReference type="GO" id="GO:0009535">
    <property type="term" value="C:chloroplast thylakoid membrane"/>
    <property type="evidence" value="ECO:0000318"/>
    <property type="project" value="GO_Central"/>
</dbReference>
<dbReference type="GO" id="GO:0009522">
    <property type="term" value="C:photosystem I"/>
    <property type="evidence" value="ECO:0007669"/>
    <property type="project" value="UniProtKB-KW"/>
</dbReference>
<dbReference type="GO" id="GO:0009523">
    <property type="term" value="C:photosystem II"/>
    <property type="evidence" value="ECO:0007669"/>
    <property type="project" value="UniProtKB-KW"/>
</dbReference>
<dbReference type="GO" id="GO:0016168">
    <property type="term" value="F:chlorophyll binding"/>
    <property type="evidence" value="ECO:0007669"/>
    <property type="project" value="UniProtKB-KW"/>
</dbReference>
<dbReference type="GO" id="GO:0046872">
    <property type="term" value="F:metal ion binding"/>
    <property type="evidence" value="ECO:0007669"/>
    <property type="project" value="UniProtKB-KW"/>
</dbReference>
<dbReference type="GO" id="GO:0009768">
    <property type="term" value="P:photosynthesis, light harvesting in photosystem I"/>
    <property type="evidence" value="ECO:0000318"/>
    <property type="project" value="GO_Central"/>
</dbReference>
<dbReference type="GO" id="GO:0009416">
    <property type="term" value="P:response to light stimulus"/>
    <property type="evidence" value="ECO:0000318"/>
    <property type="project" value="GO_Central"/>
</dbReference>
<dbReference type="FunFam" id="1.10.3460.10:FF:000006">
    <property type="entry name" value="Chlorophyll a-b binding protein, chloroplastic"/>
    <property type="match status" value="1"/>
</dbReference>
<dbReference type="Gene3D" id="1.10.3460.10">
    <property type="entry name" value="Chlorophyll a/b binding protein domain"/>
    <property type="match status" value="1"/>
</dbReference>
<dbReference type="InterPro" id="IPR001344">
    <property type="entry name" value="Chloro_AB-bd_pln"/>
</dbReference>
<dbReference type="InterPro" id="IPR022796">
    <property type="entry name" value="Chloroa_b-bind"/>
</dbReference>
<dbReference type="PANTHER" id="PTHR21649">
    <property type="entry name" value="CHLOROPHYLL A/B BINDING PROTEIN"/>
    <property type="match status" value="1"/>
</dbReference>
<dbReference type="Pfam" id="PF00504">
    <property type="entry name" value="Chloroa_b-bind"/>
    <property type="match status" value="1"/>
</dbReference>
<dbReference type="SUPFAM" id="SSF103511">
    <property type="entry name" value="Chlorophyll a-b binding protein"/>
    <property type="match status" value="1"/>
</dbReference>
<accession>P27522</accession>
<name>CB13_SOLLC</name>
<reference key="1">
    <citation type="journal article" date="1989" name="Plant Mol. Biol.">
        <title>A new member of the CAB gene family: structure, expression and chromosomal location of Cab-8, the tomato gene encoding the type III chlorophyll a/b-binding polypeptide of photosystem I.</title>
        <authorList>
            <person name="Pichersky E."/>
            <person name="Brock T.G."/>
            <person name="Nguyen D."/>
            <person name="Hoffman N.E."/>
            <person name="Piechulla B."/>
            <person name="Tanksley S.D."/>
            <person name="Green B.R."/>
        </authorList>
    </citation>
    <scope>NUCLEOTIDE SEQUENCE [GENOMIC DNA]</scope>
</reference>
<gene>
    <name type="primary">CAB8</name>
</gene>